<name>FR1L4_MOUSE</name>
<organism>
    <name type="scientific">Mus musculus</name>
    <name type="common">Mouse</name>
    <dbReference type="NCBI Taxonomy" id="10090"/>
    <lineage>
        <taxon>Eukaryota</taxon>
        <taxon>Metazoa</taxon>
        <taxon>Chordata</taxon>
        <taxon>Craniata</taxon>
        <taxon>Vertebrata</taxon>
        <taxon>Euteleostomi</taxon>
        <taxon>Mammalia</taxon>
        <taxon>Eutheria</taxon>
        <taxon>Euarchontoglires</taxon>
        <taxon>Glires</taxon>
        <taxon>Rodentia</taxon>
        <taxon>Myomorpha</taxon>
        <taxon>Muroidea</taxon>
        <taxon>Muridae</taxon>
        <taxon>Murinae</taxon>
        <taxon>Mus</taxon>
        <taxon>Mus</taxon>
    </lineage>
</organism>
<proteinExistence type="evidence at transcript level"/>
<sequence length="1992" mass="223891">MALTVCVRHLTGLPGTHDRQVRLCFRGFTQKTRKIHCGREADVGELFRWPHYGSPLAGESLSVQVVNCSRVFSPRPLGTLVISLQQLQSAGHLVLREALVDERLRVSPIQVELDLKYQPPEGAAGTWAEEDFGTPIRDSLELIIPNVGFQDMEPGEAQLERRAVALGRRLARSLGTQDDEENELELEPELEEEPDVEISGVVFSPLKSRALGLPRGDPFKVCKAQDFQVGVTVLEAQKLVGVNINPYVAVRVGDQRKVTATLRGTNCPFYNEYFLFEFHETRLHLQDLLLEITAFHSQTLPFMATRIGTFRMDLGMALDQPDGHFHQKWAPLHDPRDTRAGTKGFVKITLSVRARGDLPLPPPPPCPGTSSDIEKNLLLPHGVQAERPWARLRVRVYRAEGLPTVRTGLLGSLARALHDQNVLLDPYVRVSFLGQQGETSVRGEETAPKWNEQLSFVELFPPLTRSLRLQLRDNAPLVDVALATHVLDLRQISNSGRAAGFNPTFGPAWVPLYGSLPSGRLRDDLQSLNEGLGEGIWFRGRLLVAVSMEVYEGRVEPKPSQTTQRSGLSRLTGKKKKKKEKTRQGQTPAGILQPASASTSEDAPEIPSAMEVEVEDLLPLPENALASFEDFLLFGVLFEATMIDPSLAKKPISLEISIGHAGRQEEQSGQGSRADEGSESSTLEVQPLLESEDRGAGQEEQELLGTPAQWPEPVDGNGPYLCLPLRHRKPCLHVWSCWEDYTWRLQSSNSVCKVAERLDHGLQEVEKMQRRSGPGACTRLKQTLEELVAGSRQFCHGAERRTMTRPNALDRCRAKLLTHSLNLMARQGLRLLRSLRLNNMQRTVVLAKKLLARLRFLAQEPQPPLPDVLVWMFSGQRRVAYARIPAQDILYSVVEEERGRDCGKIQSLLLTVPGAAPGEVCAKLELFLWLGLGKQAKACTSELPMDLLPEPSSGLPQSLYRDDFRYFQLRAHLYQARGVLAADDSGLSDPFARVLISTQCQTTRVLEQTLSPLWDELLVFDQLIVDGRREHLREEPPLVVINVFDHNKFGPAVFLGRAFAAPRVKLIEDPYQRPELQFFPLRKGPQAAGEVIATFELIELDYSGHLEPSVPSDVEPRDLASLVEPISGHLSLPPSVRPVLRAFRVEVLFWGLRGLGRVHLFEIEKPQVVLEVAGRRVESEVLPNYRENPNFTELVRHVTVDLPEQPYLQPPLSILVIERRAFGRTVLVGSHIVPHMLRFILQGHEDPQEEEETEEETRDLVPHGPQGEKSLPEAGTSRQLLKAPLKKLTLGLLGQGPELEEDIPDPEEMDWWSKYYASLQEFQGQPSSDDEMDEAGDADGTHLISGDREAQEQGETDSKVSVPRKKAIATLKIYNSSLEDEFSHFEDWLSVFPLYRGQGGQDGEGEGASGHFVGKFKGSFLIYPESEAKSFSEPQISRGVPQNRPIKLLVRVYIVKATNLAPADPNGKADPYVVVSAGKEQRDTKERYIPKQLNPIFGEVLELSVSLPAQPELTVAVFDHDLVGSDDLIGETHIDLENRFYSHHRANCGLASQYDVNGYNAWRDAFRPSQILAGLCQRCGLPVPEYRAGAVKVGSRVFLTPSEAPPPDDRKPKVTSEASEEAQALHVLRRWQEMPGLGIQLVPEHVETRPLYHPRSPGLLQGSLHMWIDIFPSDVPAPPPVDIKPRQPISYELRVVIWNTDDVALDDVNPLTGERSSDIYVKSWVKGLEQDRQETDVHFNSLTGEGNFNWRFVFRFDYLPTEREVSVRRKPGPFALEEAEFRQPAVLVLQVWDYDRISANDFLGSLELQLPDMVRGARDPEHCSVRLALDGAGPRCNLFRCHRLRGWWPVVKMKDMEDVEREAREAQAGKKRKRKRRAGRPEDLEFTDTGGNVYILTGKVEAEFELLTVEEAEKRPVGKGRKEPEPLEKPNRPKTSFNWFVNPLKTFIFFIWRRYWRILVLLLLALITIFLLLVFYTIPGQISEVIFSPVHK</sequence>
<accession>A3KGK3</accession>
<accession>B7ZCP2</accession>
<dbReference type="EMBL" id="AL833786">
    <property type="protein sequence ID" value="CAX15728.1"/>
    <property type="status" value="ALT_SEQ"/>
    <property type="molecule type" value="Genomic_DNA"/>
</dbReference>
<dbReference type="EMBL" id="AK035669">
    <property type="status" value="NOT_ANNOTATED_CDS"/>
    <property type="molecule type" value="mRNA"/>
</dbReference>
<dbReference type="SMR" id="A3KGK3"/>
<dbReference type="STRING" id="10090.ENSMUSP00000105240"/>
<dbReference type="iPTMnet" id="A3KGK3"/>
<dbReference type="PhosphoSitePlus" id="A3KGK3"/>
<dbReference type="jPOST" id="A3KGK3"/>
<dbReference type="PaxDb" id="10090-ENSMUSP00000105240"/>
<dbReference type="ProteomicsDB" id="267513">
    <molecule id="A3KGK3-1"/>
</dbReference>
<dbReference type="ProteomicsDB" id="267514">
    <molecule id="A3KGK3-2"/>
</dbReference>
<dbReference type="AGR" id="MGI:1921812"/>
<dbReference type="MGI" id="MGI:1921812">
    <property type="gene designation" value="Fer1l4"/>
</dbReference>
<dbReference type="eggNOG" id="KOG1326">
    <property type="taxonomic scope" value="Eukaryota"/>
</dbReference>
<dbReference type="InParanoid" id="A3KGK3"/>
<dbReference type="TreeFam" id="TF316871"/>
<dbReference type="ChiTaRS" id="Fer1l4">
    <property type="organism name" value="mouse"/>
</dbReference>
<dbReference type="PRO" id="PR:A3KGK3"/>
<dbReference type="Proteomes" id="UP000000589">
    <property type="component" value="Unplaced"/>
</dbReference>
<dbReference type="RNAct" id="A3KGK3">
    <property type="molecule type" value="protein"/>
</dbReference>
<dbReference type="GO" id="GO:0016020">
    <property type="term" value="C:membrane"/>
    <property type="evidence" value="ECO:0007669"/>
    <property type="project" value="UniProtKB-SubCell"/>
</dbReference>
<dbReference type="GO" id="GO:0046872">
    <property type="term" value="F:metal ion binding"/>
    <property type="evidence" value="ECO:0007669"/>
    <property type="project" value="UniProtKB-KW"/>
</dbReference>
<dbReference type="CDD" id="cd08373">
    <property type="entry name" value="C2A_Ferlin"/>
    <property type="match status" value="1"/>
</dbReference>
<dbReference type="CDD" id="cd04011">
    <property type="entry name" value="C2B_Ferlin"/>
    <property type="match status" value="1"/>
</dbReference>
<dbReference type="CDD" id="cd04018">
    <property type="entry name" value="C2C_Ferlin"/>
    <property type="match status" value="1"/>
</dbReference>
<dbReference type="CDD" id="cd04017">
    <property type="entry name" value="C2D_Ferlin"/>
    <property type="match status" value="1"/>
</dbReference>
<dbReference type="CDD" id="cd04037">
    <property type="entry name" value="C2E_Ferlin"/>
    <property type="match status" value="1"/>
</dbReference>
<dbReference type="CDD" id="cd08374">
    <property type="entry name" value="C2F_Ferlin"/>
    <property type="match status" value="1"/>
</dbReference>
<dbReference type="Gene3D" id="2.60.40.150">
    <property type="entry name" value="C2 domain"/>
    <property type="match status" value="6"/>
</dbReference>
<dbReference type="InterPro" id="IPR000008">
    <property type="entry name" value="C2_dom"/>
</dbReference>
<dbReference type="InterPro" id="IPR035892">
    <property type="entry name" value="C2_domain_sf"/>
</dbReference>
<dbReference type="InterPro" id="IPR037726">
    <property type="entry name" value="C2A_Ferlin"/>
</dbReference>
<dbReference type="InterPro" id="IPR037720">
    <property type="entry name" value="C2B_Ferlin"/>
</dbReference>
<dbReference type="InterPro" id="IPR037722">
    <property type="entry name" value="C2C_Ferlin"/>
</dbReference>
<dbReference type="InterPro" id="IPR037723">
    <property type="entry name" value="C2D_Ferlin"/>
</dbReference>
<dbReference type="InterPro" id="IPR037724">
    <property type="entry name" value="C2E_Ferlin"/>
</dbReference>
<dbReference type="InterPro" id="IPR037725">
    <property type="entry name" value="C2F_Ferlin"/>
</dbReference>
<dbReference type="InterPro" id="IPR012968">
    <property type="entry name" value="FerIin_dom"/>
</dbReference>
<dbReference type="InterPro" id="IPR037721">
    <property type="entry name" value="Ferlin"/>
</dbReference>
<dbReference type="InterPro" id="IPR012561">
    <property type="entry name" value="Ferlin_B-domain"/>
</dbReference>
<dbReference type="InterPro" id="IPR032362">
    <property type="entry name" value="Ferlin_C"/>
</dbReference>
<dbReference type="InterPro" id="IPR055072">
    <property type="entry name" value="Ferlin_DSRM"/>
</dbReference>
<dbReference type="PANTHER" id="PTHR12546">
    <property type="entry name" value="FER-1-LIKE"/>
    <property type="match status" value="1"/>
</dbReference>
<dbReference type="PANTHER" id="PTHR12546:SF36">
    <property type="entry name" value="FER-1-LIKE PROTEIN 4"/>
    <property type="match status" value="1"/>
</dbReference>
<dbReference type="Pfam" id="PF00168">
    <property type="entry name" value="C2"/>
    <property type="match status" value="5"/>
</dbReference>
<dbReference type="Pfam" id="PF22901">
    <property type="entry name" value="dsrm_Ferlin"/>
    <property type="match status" value="1"/>
</dbReference>
<dbReference type="Pfam" id="PF08150">
    <property type="entry name" value="FerB"/>
    <property type="match status" value="1"/>
</dbReference>
<dbReference type="Pfam" id="PF08151">
    <property type="entry name" value="FerI"/>
    <property type="match status" value="1"/>
</dbReference>
<dbReference type="Pfam" id="PF16165">
    <property type="entry name" value="Ferlin_C"/>
    <property type="match status" value="1"/>
</dbReference>
<dbReference type="SMART" id="SM00239">
    <property type="entry name" value="C2"/>
    <property type="match status" value="5"/>
</dbReference>
<dbReference type="SMART" id="SM01201">
    <property type="entry name" value="FerB"/>
    <property type="match status" value="1"/>
</dbReference>
<dbReference type="SMART" id="SM01202">
    <property type="entry name" value="FerI"/>
    <property type="match status" value="1"/>
</dbReference>
<dbReference type="SUPFAM" id="SSF49562">
    <property type="entry name" value="C2 domain (Calcium/lipid-binding domain, CaLB)"/>
    <property type="match status" value="7"/>
</dbReference>
<dbReference type="PROSITE" id="PS50004">
    <property type="entry name" value="C2"/>
    <property type="match status" value="7"/>
</dbReference>
<feature type="chain" id="PRO_0000346423" description="Fer-1-like protein 4">
    <location>
        <begin position="1"/>
        <end position="1992"/>
    </location>
</feature>
<feature type="topological domain" description="Extracellular" evidence="1">
    <location>
        <begin position="1"/>
        <end position="1952"/>
    </location>
</feature>
<feature type="transmembrane region" description="Helical" evidence="1">
    <location>
        <begin position="1953"/>
        <end position="1973"/>
    </location>
</feature>
<feature type="topological domain" description="Cytoplasmic" evidence="1">
    <location>
        <begin position="1974"/>
        <end position="1992"/>
    </location>
</feature>
<feature type="domain" description="C2 1" evidence="2">
    <location>
        <begin position="1"/>
        <end position="97"/>
    </location>
</feature>
<feature type="domain" description="C2 2" evidence="2">
    <location>
        <begin position="214"/>
        <end position="330"/>
    </location>
</feature>
<feature type="domain" description="C2 3" evidence="2">
    <location>
        <begin position="369"/>
        <end position="502"/>
    </location>
</feature>
<feature type="domain" description="C2 4" evidence="2">
    <location>
        <begin position="951"/>
        <end position="1078"/>
    </location>
</feature>
<feature type="domain" description="C2 5" evidence="2">
    <location>
        <begin position="1126"/>
        <end position="1250"/>
    </location>
</feature>
<feature type="domain" description="C2 6" evidence="2">
    <location>
        <begin position="1430"/>
        <end position="1549"/>
    </location>
</feature>
<feature type="domain" description="C2 7" evidence="2">
    <location>
        <begin position="1675"/>
        <end position="1824"/>
    </location>
</feature>
<feature type="region of interest" description="Disordered" evidence="3">
    <location>
        <begin position="554"/>
        <end position="606"/>
    </location>
</feature>
<feature type="region of interest" description="Disordered" evidence="3">
    <location>
        <begin position="661"/>
        <end position="686"/>
    </location>
</feature>
<feature type="region of interest" description="Disordered" evidence="3">
    <location>
        <begin position="691"/>
        <end position="710"/>
    </location>
</feature>
<feature type="region of interest" description="Disordered" evidence="3">
    <location>
        <begin position="1245"/>
        <end position="1276"/>
    </location>
</feature>
<feature type="region of interest" description="Disordered" evidence="3">
    <location>
        <begin position="1322"/>
        <end position="1361"/>
    </location>
</feature>
<feature type="region of interest" description="Disordered" evidence="3">
    <location>
        <begin position="1862"/>
        <end position="1885"/>
    </location>
</feature>
<feature type="compositionally biased region" description="Polar residues" evidence="3">
    <location>
        <begin position="559"/>
        <end position="569"/>
    </location>
</feature>
<feature type="compositionally biased region" description="Basic residues" evidence="3">
    <location>
        <begin position="572"/>
        <end position="581"/>
    </location>
</feature>
<feature type="compositionally biased region" description="Acidic residues" evidence="3">
    <location>
        <begin position="1247"/>
        <end position="1257"/>
    </location>
</feature>
<feature type="compositionally biased region" description="Acidic residues" evidence="3">
    <location>
        <begin position="1328"/>
        <end position="1337"/>
    </location>
</feature>
<feature type="compositionally biased region" description="Basic residues" evidence="3">
    <location>
        <begin position="1869"/>
        <end position="1878"/>
    </location>
</feature>
<feature type="binding site" evidence="2">
    <location>
        <position position="1464"/>
    </location>
    <ligand>
        <name>Ca(2+)</name>
        <dbReference type="ChEBI" id="CHEBI:29108"/>
        <label>1</label>
    </ligand>
</feature>
<feature type="binding site" evidence="2">
    <location>
        <position position="1464"/>
    </location>
    <ligand>
        <name>Ca(2+)</name>
        <dbReference type="ChEBI" id="CHEBI:29108"/>
        <label>2</label>
    </ligand>
</feature>
<feature type="binding site" evidence="2">
    <location>
        <position position="1470"/>
    </location>
    <ligand>
        <name>Ca(2+)</name>
        <dbReference type="ChEBI" id="CHEBI:29108"/>
        <label>1</label>
    </ligand>
</feature>
<feature type="binding site" evidence="2">
    <location>
        <position position="1519"/>
    </location>
    <ligand>
        <name>Ca(2+)</name>
        <dbReference type="ChEBI" id="CHEBI:29108"/>
        <label>1</label>
    </ligand>
</feature>
<feature type="binding site" evidence="2">
    <location>
        <position position="1519"/>
    </location>
    <ligand>
        <name>Ca(2+)</name>
        <dbReference type="ChEBI" id="CHEBI:29108"/>
        <label>2</label>
    </ligand>
</feature>
<feature type="binding site" evidence="2">
    <location>
        <position position="1521"/>
    </location>
    <ligand>
        <name>Ca(2+)</name>
        <dbReference type="ChEBI" id="CHEBI:29108"/>
        <label>1</label>
    </ligand>
</feature>
<feature type="binding site" evidence="2">
    <location>
        <position position="1521"/>
    </location>
    <ligand>
        <name>Ca(2+)</name>
        <dbReference type="ChEBI" id="CHEBI:29108"/>
        <label>2</label>
    </ligand>
</feature>
<feature type="binding site" evidence="2">
    <location>
        <position position="1527"/>
    </location>
    <ligand>
        <name>Ca(2+)</name>
        <dbReference type="ChEBI" id="CHEBI:29108"/>
        <label>2</label>
    </ligand>
</feature>
<feature type="binding site" evidence="2">
    <location>
        <position position="1795"/>
    </location>
    <ligand>
        <name>Ca(2+)</name>
        <dbReference type="ChEBI" id="CHEBI:29108"/>
        <label>3</label>
    </ligand>
</feature>
<feature type="binding site" evidence="2">
    <location>
        <position position="1798"/>
    </location>
    <ligand>
        <name>Ca(2+)</name>
        <dbReference type="ChEBI" id="CHEBI:29108"/>
        <label>3</label>
    </ligand>
</feature>
<feature type="binding site" evidence="2">
    <location>
        <position position="1801"/>
    </location>
    <ligand>
        <name>Ca(2+)</name>
        <dbReference type="ChEBI" id="CHEBI:29108"/>
        <label>3</label>
    </ligand>
</feature>
<feature type="splice variant" id="VSP_034990" description="In isoform 2." evidence="4">
    <original>GKVE</original>
    <variation>VRSP</variation>
    <location>
        <begin position="1898"/>
        <end position="1901"/>
    </location>
</feature>
<feature type="splice variant" id="VSP_034991" description="In isoform 2." evidence="4">
    <location>
        <begin position="1902"/>
        <end position="1992"/>
    </location>
</feature>
<comment type="cofactor">
    <cofactor evidence="2">
        <name>Ca(2+)</name>
        <dbReference type="ChEBI" id="CHEBI:29108"/>
    </cofactor>
</comment>
<comment type="subcellular location">
    <subcellularLocation>
        <location evidence="5">Membrane</location>
        <topology evidence="5">Single-pass membrane protein</topology>
    </subcellularLocation>
</comment>
<comment type="alternative products">
    <event type="alternative splicing"/>
    <isoform>
        <id>A3KGK3-1</id>
        <name>1</name>
        <sequence type="displayed"/>
    </isoform>
    <isoform>
        <id>A3KGK3-2</id>
        <name>2</name>
        <sequence type="described" ref="VSP_034990 VSP_034991"/>
    </isoform>
</comment>
<comment type="sequence caution" evidence="5">
    <conflict type="erroneous termination">
        <sequence resource="EMBL" id="AK035669"/>
    </conflict>
    <text>Truncated C-terminus.</text>
</comment>
<comment type="sequence caution" evidence="5">
    <conflict type="erroneous gene model prediction">
        <sequence resource="EMBL-CDS" id="CAX15728"/>
    </conflict>
</comment>
<reference key="1">
    <citation type="journal article" date="2009" name="PLoS Biol.">
        <title>Lineage-specific biology revealed by a finished genome assembly of the mouse.</title>
        <authorList>
            <person name="Church D.M."/>
            <person name="Goodstadt L."/>
            <person name="Hillier L.W."/>
            <person name="Zody M.C."/>
            <person name="Goldstein S."/>
            <person name="She X."/>
            <person name="Bult C.J."/>
            <person name="Agarwala R."/>
            <person name="Cherry J.L."/>
            <person name="DiCuccio M."/>
            <person name="Hlavina W."/>
            <person name="Kapustin Y."/>
            <person name="Meric P."/>
            <person name="Maglott D."/>
            <person name="Birtle Z."/>
            <person name="Marques A.C."/>
            <person name="Graves T."/>
            <person name="Zhou S."/>
            <person name="Teague B."/>
            <person name="Potamousis K."/>
            <person name="Churas C."/>
            <person name="Place M."/>
            <person name="Herschleb J."/>
            <person name="Runnheim R."/>
            <person name="Forrest D."/>
            <person name="Amos-Landgraf J."/>
            <person name="Schwartz D.C."/>
            <person name="Cheng Z."/>
            <person name="Lindblad-Toh K."/>
            <person name="Eichler E.E."/>
            <person name="Ponting C.P."/>
        </authorList>
    </citation>
    <scope>NUCLEOTIDE SEQUENCE [LARGE SCALE GENOMIC DNA]</scope>
    <source>
        <strain>C57BL/6J</strain>
    </source>
</reference>
<reference key="2">
    <citation type="journal article" date="2005" name="Science">
        <title>The transcriptional landscape of the mammalian genome.</title>
        <authorList>
            <person name="Carninci P."/>
            <person name="Kasukawa T."/>
            <person name="Katayama S."/>
            <person name="Gough J."/>
            <person name="Frith M.C."/>
            <person name="Maeda N."/>
            <person name="Oyama R."/>
            <person name="Ravasi T."/>
            <person name="Lenhard B."/>
            <person name="Wells C."/>
            <person name="Kodzius R."/>
            <person name="Shimokawa K."/>
            <person name="Bajic V.B."/>
            <person name="Brenner S.E."/>
            <person name="Batalov S."/>
            <person name="Forrest A.R."/>
            <person name="Zavolan M."/>
            <person name="Davis M.J."/>
            <person name="Wilming L.G."/>
            <person name="Aidinis V."/>
            <person name="Allen J.E."/>
            <person name="Ambesi-Impiombato A."/>
            <person name="Apweiler R."/>
            <person name="Aturaliya R.N."/>
            <person name="Bailey T.L."/>
            <person name="Bansal M."/>
            <person name="Baxter L."/>
            <person name="Beisel K.W."/>
            <person name="Bersano T."/>
            <person name="Bono H."/>
            <person name="Chalk A.M."/>
            <person name="Chiu K.P."/>
            <person name="Choudhary V."/>
            <person name="Christoffels A."/>
            <person name="Clutterbuck D.R."/>
            <person name="Crowe M.L."/>
            <person name="Dalla E."/>
            <person name="Dalrymple B.P."/>
            <person name="de Bono B."/>
            <person name="Della Gatta G."/>
            <person name="di Bernardo D."/>
            <person name="Down T."/>
            <person name="Engstrom P."/>
            <person name="Fagiolini M."/>
            <person name="Faulkner G."/>
            <person name="Fletcher C.F."/>
            <person name="Fukushima T."/>
            <person name="Furuno M."/>
            <person name="Futaki S."/>
            <person name="Gariboldi M."/>
            <person name="Georgii-Hemming P."/>
            <person name="Gingeras T.R."/>
            <person name="Gojobori T."/>
            <person name="Green R.E."/>
            <person name="Gustincich S."/>
            <person name="Harbers M."/>
            <person name="Hayashi Y."/>
            <person name="Hensch T.K."/>
            <person name="Hirokawa N."/>
            <person name="Hill D."/>
            <person name="Huminiecki L."/>
            <person name="Iacono M."/>
            <person name="Ikeo K."/>
            <person name="Iwama A."/>
            <person name="Ishikawa T."/>
            <person name="Jakt M."/>
            <person name="Kanapin A."/>
            <person name="Katoh M."/>
            <person name="Kawasawa Y."/>
            <person name="Kelso J."/>
            <person name="Kitamura H."/>
            <person name="Kitano H."/>
            <person name="Kollias G."/>
            <person name="Krishnan S.P."/>
            <person name="Kruger A."/>
            <person name="Kummerfeld S.K."/>
            <person name="Kurochkin I.V."/>
            <person name="Lareau L.F."/>
            <person name="Lazarevic D."/>
            <person name="Lipovich L."/>
            <person name="Liu J."/>
            <person name="Liuni S."/>
            <person name="McWilliam S."/>
            <person name="Madan Babu M."/>
            <person name="Madera M."/>
            <person name="Marchionni L."/>
            <person name="Matsuda H."/>
            <person name="Matsuzawa S."/>
            <person name="Miki H."/>
            <person name="Mignone F."/>
            <person name="Miyake S."/>
            <person name="Morris K."/>
            <person name="Mottagui-Tabar S."/>
            <person name="Mulder N."/>
            <person name="Nakano N."/>
            <person name="Nakauchi H."/>
            <person name="Ng P."/>
            <person name="Nilsson R."/>
            <person name="Nishiguchi S."/>
            <person name="Nishikawa S."/>
            <person name="Nori F."/>
            <person name="Ohara O."/>
            <person name="Okazaki Y."/>
            <person name="Orlando V."/>
            <person name="Pang K.C."/>
            <person name="Pavan W.J."/>
            <person name="Pavesi G."/>
            <person name="Pesole G."/>
            <person name="Petrovsky N."/>
            <person name="Piazza S."/>
            <person name="Reed J."/>
            <person name="Reid J.F."/>
            <person name="Ring B.Z."/>
            <person name="Ringwald M."/>
            <person name="Rost B."/>
            <person name="Ruan Y."/>
            <person name="Salzberg S.L."/>
            <person name="Sandelin A."/>
            <person name="Schneider C."/>
            <person name="Schoenbach C."/>
            <person name="Sekiguchi K."/>
            <person name="Semple C.A."/>
            <person name="Seno S."/>
            <person name="Sessa L."/>
            <person name="Sheng Y."/>
            <person name="Shibata Y."/>
            <person name="Shimada H."/>
            <person name="Shimada K."/>
            <person name="Silva D."/>
            <person name="Sinclair B."/>
            <person name="Sperling S."/>
            <person name="Stupka E."/>
            <person name="Sugiura K."/>
            <person name="Sultana R."/>
            <person name="Takenaka Y."/>
            <person name="Taki K."/>
            <person name="Tammoja K."/>
            <person name="Tan S.L."/>
            <person name="Tang S."/>
            <person name="Taylor M.S."/>
            <person name="Tegner J."/>
            <person name="Teichmann S.A."/>
            <person name="Ueda H.R."/>
            <person name="van Nimwegen E."/>
            <person name="Verardo R."/>
            <person name="Wei C.L."/>
            <person name="Yagi K."/>
            <person name="Yamanishi H."/>
            <person name="Zabarovsky E."/>
            <person name="Zhu S."/>
            <person name="Zimmer A."/>
            <person name="Hide W."/>
            <person name="Bult C."/>
            <person name="Grimmond S.M."/>
            <person name="Teasdale R.D."/>
            <person name="Liu E.T."/>
            <person name="Brusic V."/>
            <person name="Quackenbush J."/>
            <person name="Wahlestedt C."/>
            <person name="Mattick J.S."/>
            <person name="Hume D.A."/>
            <person name="Kai C."/>
            <person name="Sasaki D."/>
            <person name="Tomaru Y."/>
            <person name="Fukuda S."/>
            <person name="Kanamori-Katayama M."/>
            <person name="Suzuki M."/>
            <person name="Aoki J."/>
            <person name="Arakawa T."/>
            <person name="Iida J."/>
            <person name="Imamura K."/>
            <person name="Itoh M."/>
            <person name="Kato T."/>
            <person name="Kawaji H."/>
            <person name="Kawagashira N."/>
            <person name="Kawashima T."/>
            <person name="Kojima M."/>
            <person name="Kondo S."/>
            <person name="Konno H."/>
            <person name="Nakano K."/>
            <person name="Ninomiya N."/>
            <person name="Nishio T."/>
            <person name="Okada M."/>
            <person name="Plessy C."/>
            <person name="Shibata K."/>
            <person name="Shiraki T."/>
            <person name="Suzuki S."/>
            <person name="Tagami M."/>
            <person name="Waki K."/>
            <person name="Watahiki A."/>
            <person name="Okamura-Oho Y."/>
            <person name="Suzuki H."/>
            <person name="Kawai J."/>
            <person name="Hayashizaki Y."/>
        </authorList>
    </citation>
    <scope>NUCLEOTIDE SEQUENCE [LARGE SCALE MRNA] OF 954-1992 (ISOFORM 2)</scope>
    <source>
        <tissue>Urinary bladder</tissue>
    </source>
</reference>
<evidence type="ECO:0000255" key="1"/>
<evidence type="ECO:0000255" key="2">
    <source>
        <dbReference type="PROSITE-ProRule" id="PRU00041"/>
    </source>
</evidence>
<evidence type="ECO:0000256" key="3">
    <source>
        <dbReference type="SAM" id="MobiDB-lite"/>
    </source>
</evidence>
<evidence type="ECO:0000303" key="4">
    <source>
    </source>
</evidence>
<evidence type="ECO:0000305" key="5"/>
<gene>
    <name type="primary">Fer1l4</name>
</gene>
<protein>
    <recommendedName>
        <fullName>Fer-1-like protein 4</fullName>
    </recommendedName>
</protein>
<keyword id="KW-0025">Alternative splicing</keyword>
<keyword id="KW-0106">Calcium</keyword>
<keyword id="KW-0472">Membrane</keyword>
<keyword id="KW-0479">Metal-binding</keyword>
<keyword id="KW-1185">Reference proteome</keyword>
<keyword id="KW-0677">Repeat</keyword>
<keyword id="KW-0812">Transmembrane</keyword>
<keyword id="KW-1133">Transmembrane helix</keyword>